<organism>
    <name type="scientific">Psychromonas ingrahamii (strain DSM 17664 / CCUG 51855 / 37)</name>
    <dbReference type="NCBI Taxonomy" id="357804"/>
    <lineage>
        <taxon>Bacteria</taxon>
        <taxon>Pseudomonadati</taxon>
        <taxon>Pseudomonadota</taxon>
        <taxon>Gammaproteobacteria</taxon>
        <taxon>Alteromonadales</taxon>
        <taxon>Psychromonadaceae</taxon>
        <taxon>Psychromonas</taxon>
    </lineage>
</organism>
<feature type="chain" id="PRO_0000302423" description="Glycine cleavage system H protein">
    <location>
        <begin position="1"/>
        <end position="125"/>
    </location>
</feature>
<feature type="domain" description="Lipoyl-binding" evidence="2">
    <location>
        <begin position="21"/>
        <end position="103"/>
    </location>
</feature>
<feature type="modified residue" description="N6-lipoyllysine" evidence="1">
    <location>
        <position position="62"/>
    </location>
</feature>
<comment type="function">
    <text evidence="1">The glycine cleavage system catalyzes the degradation of glycine. The H protein shuttles the methylamine group of glycine from the P protein to the T protein.</text>
</comment>
<comment type="cofactor">
    <cofactor evidence="1">
        <name>(R)-lipoate</name>
        <dbReference type="ChEBI" id="CHEBI:83088"/>
    </cofactor>
    <text evidence="1">Binds 1 lipoyl cofactor covalently.</text>
</comment>
<comment type="subunit">
    <text evidence="1">The glycine cleavage system is composed of four proteins: P, T, L and H.</text>
</comment>
<comment type="similarity">
    <text evidence="1">Belongs to the GcvH family.</text>
</comment>
<gene>
    <name evidence="1" type="primary">gcvH</name>
    <name type="ordered locus">Ping_2728</name>
</gene>
<name>GCSH_PSYIN</name>
<protein>
    <recommendedName>
        <fullName evidence="1">Glycine cleavage system H protein</fullName>
    </recommendedName>
</protein>
<reference key="1">
    <citation type="journal article" date="2008" name="BMC Genomics">
        <title>Genomics of an extreme psychrophile, Psychromonas ingrahamii.</title>
        <authorList>
            <person name="Riley M."/>
            <person name="Staley J.T."/>
            <person name="Danchin A."/>
            <person name="Wang T.Z."/>
            <person name="Brettin T.S."/>
            <person name="Hauser L.J."/>
            <person name="Land M.L."/>
            <person name="Thompson L.S."/>
        </authorList>
    </citation>
    <scope>NUCLEOTIDE SEQUENCE [LARGE SCALE GENOMIC DNA]</scope>
    <source>
        <strain>DSM 17664 / CCUG 51855 / 37</strain>
    </source>
</reference>
<proteinExistence type="inferred from homology"/>
<keyword id="KW-0450">Lipoyl</keyword>
<keyword id="KW-1185">Reference proteome</keyword>
<accession>A1SY73</accession>
<evidence type="ECO:0000255" key="1">
    <source>
        <dbReference type="HAMAP-Rule" id="MF_00272"/>
    </source>
</evidence>
<evidence type="ECO:0000255" key="2">
    <source>
        <dbReference type="PROSITE-ProRule" id="PRU01066"/>
    </source>
</evidence>
<dbReference type="EMBL" id="CP000510">
    <property type="protein sequence ID" value="ABM04438.1"/>
    <property type="molecule type" value="Genomic_DNA"/>
</dbReference>
<dbReference type="RefSeq" id="WP_011770993.1">
    <property type="nucleotide sequence ID" value="NC_008709.1"/>
</dbReference>
<dbReference type="SMR" id="A1SY73"/>
<dbReference type="STRING" id="357804.Ping_2728"/>
<dbReference type="KEGG" id="pin:Ping_2728"/>
<dbReference type="eggNOG" id="COG0509">
    <property type="taxonomic scope" value="Bacteria"/>
</dbReference>
<dbReference type="HOGENOM" id="CLU_097408_2_0_6"/>
<dbReference type="OrthoDB" id="9796712at2"/>
<dbReference type="Proteomes" id="UP000000639">
    <property type="component" value="Chromosome"/>
</dbReference>
<dbReference type="GO" id="GO:0005829">
    <property type="term" value="C:cytosol"/>
    <property type="evidence" value="ECO:0007669"/>
    <property type="project" value="TreeGrafter"/>
</dbReference>
<dbReference type="GO" id="GO:0005960">
    <property type="term" value="C:glycine cleavage complex"/>
    <property type="evidence" value="ECO:0007669"/>
    <property type="project" value="InterPro"/>
</dbReference>
<dbReference type="GO" id="GO:0019464">
    <property type="term" value="P:glycine decarboxylation via glycine cleavage system"/>
    <property type="evidence" value="ECO:0007669"/>
    <property type="project" value="UniProtKB-UniRule"/>
</dbReference>
<dbReference type="CDD" id="cd06848">
    <property type="entry name" value="GCS_H"/>
    <property type="match status" value="1"/>
</dbReference>
<dbReference type="Gene3D" id="2.40.50.100">
    <property type="match status" value="1"/>
</dbReference>
<dbReference type="HAMAP" id="MF_00272">
    <property type="entry name" value="GcvH"/>
    <property type="match status" value="1"/>
</dbReference>
<dbReference type="InterPro" id="IPR000089">
    <property type="entry name" value="Biotin_lipoyl"/>
</dbReference>
<dbReference type="InterPro" id="IPR002930">
    <property type="entry name" value="GCV_H"/>
</dbReference>
<dbReference type="InterPro" id="IPR033753">
    <property type="entry name" value="GCV_H/Fam206"/>
</dbReference>
<dbReference type="InterPro" id="IPR017453">
    <property type="entry name" value="GCV_H_sub"/>
</dbReference>
<dbReference type="InterPro" id="IPR011053">
    <property type="entry name" value="Single_hybrid_motif"/>
</dbReference>
<dbReference type="NCBIfam" id="TIGR00527">
    <property type="entry name" value="gcvH"/>
    <property type="match status" value="1"/>
</dbReference>
<dbReference type="NCBIfam" id="NF002270">
    <property type="entry name" value="PRK01202.1"/>
    <property type="match status" value="1"/>
</dbReference>
<dbReference type="PANTHER" id="PTHR11715">
    <property type="entry name" value="GLYCINE CLEAVAGE SYSTEM H PROTEIN"/>
    <property type="match status" value="1"/>
</dbReference>
<dbReference type="PANTHER" id="PTHR11715:SF3">
    <property type="entry name" value="GLYCINE CLEAVAGE SYSTEM H PROTEIN-RELATED"/>
    <property type="match status" value="1"/>
</dbReference>
<dbReference type="Pfam" id="PF01597">
    <property type="entry name" value="GCV_H"/>
    <property type="match status" value="1"/>
</dbReference>
<dbReference type="SUPFAM" id="SSF51230">
    <property type="entry name" value="Single hybrid motif"/>
    <property type="match status" value="1"/>
</dbReference>
<dbReference type="PROSITE" id="PS50968">
    <property type="entry name" value="BIOTINYL_LIPOYL"/>
    <property type="match status" value="1"/>
</dbReference>
<sequence>MGSALMFTDTHEWILDNGDGSVTIGISNQAQQLLGDVVFVDMPEVGDNTQAGETFSLVESVKAASDLYAPVTGEIIEINEELEDSPELINESPYSAGWIVKIKLADRNELNNLMSSEDYLAANAE</sequence>